<organism>
    <name type="scientific">Ruthia magnifica subsp. Calyptogena magnifica</name>
    <dbReference type="NCBI Taxonomy" id="413404"/>
    <lineage>
        <taxon>Bacteria</taxon>
        <taxon>Pseudomonadati</taxon>
        <taxon>Pseudomonadota</taxon>
        <taxon>Gammaproteobacteria</taxon>
        <taxon>Candidatus Pseudothioglobaceae</taxon>
        <taxon>Candidatus Ruthturnera</taxon>
    </lineage>
</organism>
<accession>A1AW99</accession>
<reference key="1">
    <citation type="journal article" date="2007" name="Science">
        <title>The Calyptogena magnifica chemoautotrophic symbiont genome.</title>
        <authorList>
            <person name="Newton I.L.G."/>
            <person name="Woyke T."/>
            <person name="Auchtung T.A."/>
            <person name="Dilly G.F."/>
            <person name="Dutton R.J."/>
            <person name="Fisher M.C."/>
            <person name="Fontanez K.M."/>
            <person name="Lau E."/>
            <person name="Stewart F.J."/>
            <person name="Richardson P.M."/>
            <person name="Barry K.W."/>
            <person name="Saunders E."/>
            <person name="Detter J.C."/>
            <person name="Wu D."/>
            <person name="Eisen J.A."/>
            <person name="Cavanaugh C.M."/>
        </authorList>
    </citation>
    <scope>NUCLEOTIDE SEQUENCE [LARGE SCALE GENOMIC DNA]</scope>
</reference>
<sequence>MNRYYDKNADLNIIKGMKVSIIGYGSQGHAHANNLKDSGVEVVVALRADSASTEKAFVAGLTVKSIEEATDWADLVMVLAPDEFQAKIYTNSIEPNLKQGATLAFAHGFNIHYNRIIPRTDLDVIMIAPKAPGHTVRSEFVKGGGIPDLIAVFQDASGNAKATSLSYACAIGGGRTGILETSFKDETETDLFGEQVVLCGGTTALVQAGFETLVEAGYEPEMAYFECLHELKLIVDLMYEGGIANMRYSISNTAEYGDVTRGPRIVTADTKTEMKKILSEIQDGTFAKEFVANVDELPAHRDVQRKHQIEQVGESLRSMMPWINKNKIVDQSKN</sequence>
<name>ILVC_RUTMC</name>
<proteinExistence type="inferred from homology"/>
<keyword id="KW-0028">Amino-acid biosynthesis</keyword>
<keyword id="KW-0100">Branched-chain amino acid biosynthesis</keyword>
<keyword id="KW-0460">Magnesium</keyword>
<keyword id="KW-0479">Metal-binding</keyword>
<keyword id="KW-0521">NADP</keyword>
<keyword id="KW-0560">Oxidoreductase</keyword>
<evidence type="ECO:0000255" key="1">
    <source>
        <dbReference type="HAMAP-Rule" id="MF_00435"/>
    </source>
</evidence>
<evidence type="ECO:0000255" key="2">
    <source>
        <dbReference type="PROSITE-ProRule" id="PRU01197"/>
    </source>
</evidence>
<evidence type="ECO:0000255" key="3">
    <source>
        <dbReference type="PROSITE-ProRule" id="PRU01198"/>
    </source>
</evidence>
<dbReference type="EC" id="1.1.1.86" evidence="1"/>
<dbReference type="EMBL" id="CP000488">
    <property type="protein sequence ID" value="ABL02206.1"/>
    <property type="molecule type" value="Genomic_DNA"/>
</dbReference>
<dbReference type="RefSeq" id="WP_011737831.1">
    <property type="nucleotide sequence ID" value="NC_008610.1"/>
</dbReference>
<dbReference type="SMR" id="A1AW99"/>
<dbReference type="STRING" id="413404.Rmag_0447"/>
<dbReference type="KEGG" id="rma:Rmag_0447"/>
<dbReference type="eggNOG" id="COG0059">
    <property type="taxonomic scope" value="Bacteria"/>
</dbReference>
<dbReference type="HOGENOM" id="CLU_033821_0_1_6"/>
<dbReference type="OrthoDB" id="9804088at2"/>
<dbReference type="UniPathway" id="UPA00047">
    <property type="reaction ID" value="UER00056"/>
</dbReference>
<dbReference type="UniPathway" id="UPA00049">
    <property type="reaction ID" value="UER00060"/>
</dbReference>
<dbReference type="Proteomes" id="UP000002587">
    <property type="component" value="Chromosome"/>
</dbReference>
<dbReference type="GO" id="GO:0005829">
    <property type="term" value="C:cytosol"/>
    <property type="evidence" value="ECO:0007669"/>
    <property type="project" value="TreeGrafter"/>
</dbReference>
<dbReference type="GO" id="GO:0004455">
    <property type="term" value="F:ketol-acid reductoisomerase activity"/>
    <property type="evidence" value="ECO:0007669"/>
    <property type="project" value="UniProtKB-UniRule"/>
</dbReference>
<dbReference type="GO" id="GO:0000287">
    <property type="term" value="F:magnesium ion binding"/>
    <property type="evidence" value="ECO:0007669"/>
    <property type="project" value="UniProtKB-UniRule"/>
</dbReference>
<dbReference type="GO" id="GO:0050661">
    <property type="term" value="F:NADP binding"/>
    <property type="evidence" value="ECO:0007669"/>
    <property type="project" value="InterPro"/>
</dbReference>
<dbReference type="GO" id="GO:0009097">
    <property type="term" value="P:isoleucine biosynthetic process"/>
    <property type="evidence" value="ECO:0007669"/>
    <property type="project" value="UniProtKB-UniRule"/>
</dbReference>
<dbReference type="GO" id="GO:0009099">
    <property type="term" value="P:L-valine biosynthetic process"/>
    <property type="evidence" value="ECO:0007669"/>
    <property type="project" value="UniProtKB-UniRule"/>
</dbReference>
<dbReference type="FunFam" id="3.40.50.720:FF:000023">
    <property type="entry name" value="Ketol-acid reductoisomerase (NADP(+))"/>
    <property type="match status" value="1"/>
</dbReference>
<dbReference type="Gene3D" id="6.10.240.10">
    <property type="match status" value="1"/>
</dbReference>
<dbReference type="Gene3D" id="3.40.50.720">
    <property type="entry name" value="NAD(P)-binding Rossmann-like Domain"/>
    <property type="match status" value="1"/>
</dbReference>
<dbReference type="HAMAP" id="MF_00435">
    <property type="entry name" value="IlvC"/>
    <property type="match status" value="1"/>
</dbReference>
<dbReference type="InterPro" id="IPR008927">
    <property type="entry name" value="6-PGluconate_DH-like_C_sf"/>
</dbReference>
<dbReference type="InterPro" id="IPR013023">
    <property type="entry name" value="KARI"/>
</dbReference>
<dbReference type="InterPro" id="IPR000506">
    <property type="entry name" value="KARI_C"/>
</dbReference>
<dbReference type="InterPro" id="IPR013116">
    <property type="entry name" value="KARI_N"/>
</dbReference>
<dbReference type="InterPro" id="IPR014359">
    <property type="entry name" value="KARI_prok"/>
</dbReference>
<dbReference type="InterPro" id="IPR036291">
    <property type="entry name" value="NAD(P)-bd_dom_sf"/>
</dbReference>
<dbReference type="NCBIfam" id="TIGR00465">
    <property type="entry name" value="ilvC"/>
    <property type="match status" value="1"/>
</dbReference>
<dbReference type="NCBIfam" id="NF004017">
    <property type="entry name" value="PRK05479.1"/>
    <property type="match status" value="1"/>
</dbReference>
<dbReference type="NCBIfam" id="NF009940">
    <property type="entry name" value="PRK13403.1"/>
    <property type="match status" value="1"/>
</dbReference>
<dbReference type="PANTHER" id="PTHR21371">
    <property type="entry name" value="KETOL-ACID REDUCTOISOMERASE, MITOCHONDRIAL"/>
    <property type="match status" value="1"/>
</dbReference>
<dbReference type="PANTHER" id="PTHR21371:SF1">
    <property type="entry name" value="KETOL-ACID REDUCTOISOMERASE, MITOCHONDRIAL"/>
    <property type="match status" value="1"/>
</dbReference>
<dbReference type="Pfam" id="PF01450">
    <property type="entry name" value="KARI_C"/>
    <property type="match status" value="1"/>
</dbReference>
<dbReference type="Pfam" id="PF07991">
    <property type="entry name" value="KARI_N"/>
    <property type="match status" value="1"/>
</dbReference>
<dbReference type="PIRSF" id="PIRSF000116">
    <property type="entry name" value="IlvC_gammaproteo"/>
    <property type="match status" value="1"/>
</dbReference>
<dbReference type="SUPFAM" id="SSF48179">
    <property type="entry name" value="6-phosphogluconate dehydrogenase C-terminal domain-like"/>
    <property type="match status" value="1"/>
</dbReference>
<dbReference type="SUPFAM" id="SSF51735">
    <property type="entry name" value="NAD(P)-binding Rossmann-fold domains"/>
    <property type="match status" value="1"/>
</dbReference>
<dbReference type="PROSITE" id="PS51851">
    <property type="entry name" value="KARI_C"/>
    <property type="match status" value="1"/>
</dbReference>
<dbReference type="PROSITE" id="PS51850">
    <property type="entry name" value="KARI_N"/>
    <property type="match status" value="1"/>
</dbReference>
<comment type="function">
    <text evidence="1">Involved in the biosynthesis of branched-chain amino acids (BCAA). Catalyzes an alkyl-migration followed by a ketol-acid reduction of (S)-2-acetolactate (S2AL) to yield (R)-2,3-dihydroxy-isovalerate. In the isomerase reaction, S2AL is rearranged via a Mg-dependent methyl migration to produce 3-hydroxy-3-methyl-2-ketobutyrate (HMKB). In the reductase reaction, this 2-ketoacid undergoes a metal-dependent reduction by NADPH to yield (R)-2,3-dihydroxy-isovalerate.</text>
</comment>
<comment type="catalytic activity">
    <reaction evidence="1">
        <text>(2R)-2,3-dihydroxy-3-methylbutanoate + NADP(+) = (2S)-2-acetolactate + NADPH + H(+)</text>
        <dbReference type="Rhea" id="RHEA:22068"/>
        <dbReference type="ChEBI" id="CHEBI:15378"/>
        <dbReference type="ChEBI" id="CHEBI:49072"/>
        <dbReference type="ChEBI" id="CHEBI:57783"/>
        <dbReference type="ChEBI" id="CHEBI:58349"/>
        <dbReference type="ChEBI" id="CHEBI:58476"/>
        <dbReference type="EC" id="1.1.1.86"/>
    </reaction>
</comment>
<comment type="catalytic activity">
    <reaction evidence="1">
        <text>(2R,3R)-2,3-dihydroxy-3-methylpentanoate + NADP(+) = (S)-2-ethyl-2-hydroxy-3-oxobutanoate + NADPH + H(+)</text>
        <dbReference type="Rhea" id="RHEA:13493"/>
        <dbReference type="ChEBI" id="CHEBI:15378"/>
        <dbReference type="ChEBI" id="CHEBI:49256"/>
        <dbReference type="ChEBI" id="CHEBI:49258"/>
        <dbReference type="ChEBI" id="CHEBI:57783"/>
        <dbReference type="ChEBI" id="CHEBI:58349"/>
        <dbReference type="EC" id="1.1.1.86"/>
    </reaction>
</comment>
<comment type="cofactor">
    <cofactor evidence="1">
        <name>Mg(2+)</name>
        <dbReference type="ChEBI" id="CHEBI:18420"/>
    </cofactor>
    <text evidence="1">Binds 2 magnesium ions per subunit.</text>
</comment>
<comment type="pathway">
    <text evidence="1">Amino-acid biosynthesis; L-isoleucine biosynthesis; L-isoleucine from 2-oxobutanoate: step 2/4.</text>
</comment>
<comment type="pathway">
    <text evidence="1">Amino-acid biosynthesis; L-valine biosynthesis; L-valine from pyruvate: step 2/4.</text>
</comment>
<comment type="similarity">
    <text evidence="1">Belongs to the ketol-acid reductoisomerase family.</text>
</comment>
<protein>
    <recommendedName>
        <fullName evidence="1">Ketol-acid reductoisomerase (NADP(+))</fullName>
        <shortName evidence="1">KARI</shortName>
        <ecNumber evidence="1">1.1.1.86</ecNumber>
    </recommendedName>
    <alternativeName>
        <fullName evidence="1">Acetohydroxy-acid isomeroreductase</fullName>
        <shortName evidence="1">AHIR</shortName>
    </alternativeName>
    <alternativeName>
        <fullName evidence="1">Alpha-keto-beta-hydroxylacyl reductoisomerase</fullName>
    </alternativeName>
    <alternativeName>
        <fullName evidence="1">Ketol-acid reductoisomerase type 1</fullName>
    </alternativeName>
    <alternativeName>
        <fullName evidence="1">Ketol-acid reductoisomerase type I</fullName>
    </alternativeName>
</protein>
<feature type="chain" id="PRO_1000050572" description="Ketol-acid reductoisomerase (NADP(+))">
    <location>
        <begin position="1"/>
        <end position="334"/>
    </location>
</feature>
<feature type="domain" description="KARI N-terminal Rossmann" evidence="2">
    <location>
        <begin position="1"/>
        <end position="181"/>
    </location>
</feature>
<feature type="domain" description="KARI C-terminal knotted" evidence="3">
    <location>
        <begin position="182"/>
        <end position="323"/>
    </location>
</feature>
<feature type="active site" evidence="1">
    <location>
        <position position="107"/>
    </location>
</feature>
<feature type="binding site" evidence="1">
    <location>
        <begin position="24"/>
        <end position="27"/>
    </location>
    <ligand>
        <name>NADP(+)</name>
        <dbReference type="ChEBI" id="CHEBI:58349"/>
    </ligand>
</feature>
<feature type="binding site" evidence="1">
    <location>
        <position position="47"/>
    </location>
    <ligand>
        <name>NADP(+)</name>
        <dbReference type="ChEBI" id="CHEBI:58349"/>
    </ligand>
</feature>
<feature type="binding site" evidence="1">
    <location>
        <position position="50"/>
    </location>
    <ligand>
        <name>NADP(+)</name>
        <dbReference type="ChEBI" id="CHEBI:58349"/>
    </ligand>
</feature>
<feature type="binding site" evidence="1">
    <location>
        <position position="52"/>
    </location>
    <ligand>
        <name>NADP(+)</name>
        <dbReference type="ChEBI" id="CHEBI:58349"/>
    </ligand>
</feature>
<feature type="binding site" evidence="1">
    <location>
        <begin position="82"/>
        <end position="85"/>
    </location>
    <ligand>
        <name>NADP(+)</name>
        <dbReference type="ChEBI" id="CHEBI:58349"/>
    </ligand>
</feature>
<feature type="binding site" evidence="1">
    <location>
        <position position="133"/>
    </location>
    <ligand>
        <name>NADP(+)</name>
        <dbReference type="ChEBI" id="CHEBI:58349"/>
    </ligand>
</feature>
<feature type="binding site" evidence="1">
    <location>
        <position position="190"/>
    </location>
    <ligand>
        <name>Mg(2+)</name>
        <dbReference type="ChEBI" id="CHEBI:18420"/>
        <label>1</label>
    </ligand>
</feature>
<feature type="binding site" evidence="1">
    <location>
        <position position="190"/>
    </location>
    <ligand>
        <name>Mg(2+)</name>
        <dbReference type="ChEBI" id="CHEBI:18420"/>
        <label>2</label>
    </ligand>
</feature>
<feature type="binding site" evidence="1">
    <location>
        <position position="194"/>
    </location>
    <ligand>
        <name>Mg(2+)</name>
        <dbReference type="ChEBI" id="CHEBI:18420"/>
        <label>1</label>
    </ligand>
</feature>
<feature type="binding site" evidence="1">
    <location>
        <position position="226"/>
    </location>
    <ligand>
        <name>Mg(2+)</name>
        <dbReference type="ChEBI" id="CHEBI:18420"/>
        <label>2</label>
    </ligand>
</feature>
<feature type="binding site" evidence="1">
    <location>
        <position position="230"/>
    </location>
    <ligand>
        <name>Mg(2+)</name>
        <dbReference type="ChEBI" id="CHEBI:18420"/>
        <label>2</label>
    </ligand>
</feature>
<feature type="binding site" evidence="1">
    <location>
        <position position="251"/>
    </location>
    <ligand>
        <name>substrate</name>
    </ligand>
</feature>
<gene>
    <name evidence="1" type="primary">ilvC</name>
    <name type="ordered locus">Rmag_0447</name>
</gene>